<comment type="function">
    <text evidence="1 2">Transfers an acetyl group from acetyl-CoA to L-homoserine, forming acetyl-L-homoserine.</text>
</comment>
<comment type="catalytic activity">
    <reaction evidence="1 2">
        <text>L-homoserine + acetyl-CoA = O-acetyl-L-homoserine + CoA</text>
        <dbReference type="Rhea" id="RHEA:13701"/>
        <dbReference type="ChEBI" id="CHEBI:57287"/>
        <dbReference type="ChEBI" id="CHEBI:57288"/>
        <dbReference type="ChEBI" id="CHEBI:57476"/>
        <dbReference type="ChEBI" id="CHEBI:57716"/>
        <dbReference type="EC" id="2.3.1.31"/>
    </reaction>
</comment>
<comment type="pathway">
    <text evidence="1">Amino-acid biosynthesis; L-methionine biosynthesis via de novo pathway; O-acetyl-L-homoserine from L-homoserine: step 1/1.</text>
</comment>
<comment type="subcellular location">
    <subcellularLocation>
        <location evidence="1">Cytoplasm</location>
    </subcellularLocation>
</comment>
<comment type="similarity">
    <text evidence="1">Belongs to the MetA family.</text>
</comment>
<protein>
    <recommendedName>
        <fullName evidence="1">Homoserine O-acetyltransferase</fullName>
        <shortName evidence="1 3">HAT</shortName>
        <ecNumber evidence="1 2">2.3.1.31</ecNumber>
    </recommendedName>
    <alternativeName>
        <fullName evidence="1">Homoserine transacetylase</fullName>
        <shortName evidence="1">HTA</shortName>
    </alternativeName>
</protein>
<feature type="chain" id="PRO_0000440337" description="Homoserine O-acetyltransferase">
    <location>
        <begin position="1"/>
        <end position="344"/>
    </location>
</feature>
<feature type="active site" description="Acyl-thioester intermediate" evidence="1">
    <location>
        <position position="142"/>
    </location>
</feature>
<feature type="active site" description="Proton acceptor" evidence="1">
    <location>
        <position position="235"/>
    </location>
</feature>
<feature type="active site" evidence="1">
    <location>
        <position position="237"/>
    </location>
</feature>
<feature type="binding site" evidence="1">
    <location>
        <position position="163"/>
    </location>
    <ligand>
        <name>substrate</name>
    </ligand>
</feature>
<feature type="binding site" evidence="1">
    <location>
        <position position="192"/>
    </location>
    <ligand>
        <name>substrate</name>
    </ligand>
</feature>
<feature type="binding site" evidence="1">
    <location>
        <position position="249"/>
    </location>
    <ligand>
        <name>substrate</name>
    </ligand>
</feature>
<feature type="site" description="Important for acyl-CoA specificity" evidence="1">
    <location>
        <position position="111"/>
    </location>
</feature>
<feature type="site" description="Important for substrate specificity" evidence="1">
    <location>
        <position position="192"/>
    </location>
</feature>
<reference key="1">
    <citation type="submission" date="2006-12" db="EMBL/GenBank/DDBJ databases">
        <title>Bifidobacterium adolescentis complete genome sequence.</title>
        <authorList>
            <person name="Suzuki T."/>
            <person name="Tsuda Y."/>
            <person name="Kanou N."/>
            <person name="Inoue T."/>
            <person name="Kumazaki K."/>
            <person name="Nagano S."/>
            <person name="Hirai S."/>
            <person name="Tanaka K."/>
            <person name="Watanabe K."/>
        </authorList>
    </citation>
    <scope>NUCLEOTIDE SEQUENCE [LARGE SCALE GENOMIC DNA]</scope>
    <source>
        <strain>ATCC 15703 / DSM 20083 / NCTC 11814 / E194a</strain>
    </source>
</reference>
<reference key="2">
    <citation type="journal article" date="2017" name="Nat. Chem. Biol.">
        <title>Parallel evolution of non-homologous isofunctional enzymes in methionine biosynthesis.</title>
        <authorList>
            <person name="Bastard K."/>
            <person name="Perret A."/>
            <person name="Mariage A."/>
            <person name="Bessonnet T."/>
            <person name="Pinet-Turpault A."/>
            <person name="Petit J.L."/>
            <person name="Darii E."/>
            <person name="Bazire P."/>
            <person name="Vergne-Vaxelaire C."/>
            <person name="Brewee C."/>
            <person name="Debard A."/>
            <person name="Pellouin V."/>
            <person name="Besnard-Gonnet M."/>
            <person name="Artiguenave F."/>
            <person name="Medigue C."/>
            <person name="Vallenet D."/>
            <person name="Danchin A."/>
            <person name="Zaparucha A."/>
            <person name="Weissenbach J."/>
            <person name="Salanoubat M."/>
            <person name="de Berardinis V."/>
        </authorList>
    </citation>
    <scope>FUNCTION</scope>
    <scope>CATALYTIC ACTIVITY</scope>
</reference>
<evidence type="ECO:0000255" key="1">
    <source>
        <dbReference type="HAMAP-Rule" id="MF_00295"/>
    </source>
</evidence>
<evidence type="ECO:0000269" key="2">
    <source>
    </source>
</evidence>
<evidence type="ECO:0000303" key="3">
    <source>
    </source>
</evidence>
<evidence type="ECO:0000312" key="4">
    <source>
        <dbReference type="EMBL" id="BAF40215.1"/>
    </source>
</evidence>
<sequence length="344" mass="39901">MPIKIPSGLPARDILDSERIFALEKPEAERQRVRPLKLVILNLMPKKIETETQLLRLISKSPLQVEVDFMKTSTHEATHVSADHLVKFYETLDAFKDNYYDGLVVTGAPVEHLDFEQVDYWDEFKQILDWASTHVFSTMYLCWGAMGALNYRYGVRKELLPEKLFGVFPQYLQDEYCFLTNGFDEICLQPHSRLAGVNEGDIAHNPELQVLTWGPKSGPGLIATRDFSEVFALGHWEYGKYTLAEEYERDMKKGMTNVPFPENYFPHDDPKLEPLFAWRAHANLLWRNWLNWVYQTTPYDLSEVPQLREEKRLGTDRSIRHEPGSPRVDAFTPFSHDGYGVIRG</sequence>
<gene>
    <name evidence="1 3" type="primary">metAA</name>
    <name evidence="4" type="synonym">metA</name>
    <name evidence="4" type="ordered locus">BAD_1434</name>
</gene>
<proteinExistence type="evidence at protein level"/>
<accession>A1A3D2</accession>
<keyword id="KW-0012">Acyltransferase</keyword>
<keyword id="KW-0028">Amino-acid biosynthesis</keyword>
<keyword id="KW-0963">Cytoplasm</keyword>
<keyword id="KW-0486">Methionine biosynthesis</keyword>
<keyword id="KW-1185">Reference proteome</keyword>
<keyword id="KW-0808">Transferase</keyword>
<dbReference type="EC" id="2.3.1.31" evidence="1 2"/>
<dbReference type="EMBL" id="AP009256">
    <property type="protein sequence ID" value="BAF40215.1"/>
    <property type="molecule type" value="Genomic_DNA"/>
</dbReference>
<dbReference type="RefSeq" id="WP_011743723.1">
    <property type="nucleotide sequence ID" value="NZ_CAXVNC010000003.1"/>
</dbReference>
<dbReference type="SMR" id="A1A3D2"/>
<dbReference type="STRING" id="367928.BAD_1434"/>
<dbReference type="PaxDb" id="1680-BADO_1597"/>
<dbReference type="GeneID" id="4556367"/>
<dbReference type="KEGG" id="bad:BAD_1434"/>
<dbReference type="HOGENOM" id="CLU_057851_0_1_11"/>
<dbReference type="UniPathway" id="UPA00051">
    <property type="reaction ID" value="UER00074"/>
</dbReference>
<dbReference type="Proteomes" id="UP000008702">
    <property type="component" value="Chromosome"/>
</dbReference>
<dbReference type="GO" id="GO:0005737">
    <property type="term" value="C:cytoplasm"/>
    <property type="evidence" value="ECO:0007669"/>
    <property type="project" value="UniProtKB-SubCell"/>
</dbReference>
<dbReference type="GO" id="GO:0004414">
    <property type="term" value="F:homoserine O-acetyltransferase activity"/>
    <property type="evidence" value="ECO:0007669"/>
    <property type="project" value="UniProtKB-EC"/>
</dbReference>
<dbReference type="GO" id="GO:0008899">
    <property type="term" value="F:homoserine O-succinyltransferase activity"/>
    <property type="evidence" value="ECO:0007669"/>
    <property type="project" value="UniProtKB-UniRule"/>
</dbReference>
<dbReference type="GO" id="GO:0019281">
    <property type="term" value="P:L-methionine biosynthetic process from homoserine via O-succinyl-L-homoserine and cystathionine"/>
    <property type="evidence" value="ECO:0007669"/>
    <property type="project" value="InterPro"/>
</dbReference>
<dbReference type="CDD" id="cd03131">
    <property type="entry name" value="GATase1_HTS"/>
    <property type="match status" value="1"/>
</dbReference>
<dbReference type="Gene3D" id="3.40.50.880">
    <property type="match status" value="1"/>
</dbReference>
<dbReference type="HAMAP" id="MF_00295">
    <property type="entry name" value="MetA_acyltransf"/>
    <property type="match status" value="1"/>
</dbReference>
<dbReference type="InterPro" id="IPR029062">
    <property type="entry name" value="Class_I_gatase-like"/>
</dbReference>
<dbReference type="InterPro" id="IPR005697">
    <property type="entry name" value="HST_MetA"/>
</dbReference>
<dbReference type="InterPro" id="IPR033752">
    <property type="entry name" value="MetA_family"/>
</dbReference>
<dbReference type="NCBIfam" id="TIGR01001">
    <property type="entry name" value="metA"/>
    <property type="match status" value="1"/>
</dbReference>
<dbReference type="PANTHER" id="PTHR20919">
    <property type="entry name" value="HOMOSERINE O-SUCCINYLTRANSFERASE"/>
    <property type="match status" value="1"/>
</dbReference>
<dbReference type="PANTHER" id="PTHR20919:SF0">
    <property type="entry name" value="HOMOSERINE O-SUCCINYLTRANSFERASE"/>
    <property type="match status" value="1"/>
</dbReference>
<dbReference type="Pfam" id="PF04204">
    <property type="entry name" value="HTS"/>
    <property type="match status" value="1"/>
</dbReference>
<dbReference type="PIRSF" id="PIRSF000450">
    <property type="entry name" value="H_ser_succinyltr"/>
    <property type="match status" value="1"/>
</dbReference>
<dbReference type="SUPFAM" id="SSF52317">
    <property type="entry name" value="Class I glutamine amidotransferase-like"/>
    <property type="match status" value="1"/>
</dbReference>
<name>METAA_BIFAA</name>
<organism>
    <name type="scientific">Bifidobacterium adolescentis (strain ATCC 15703 / DSM 20083 / NCTC 11814 / E194a)</name>
    <dbReference type="NCBI Taxonomy" id="367928"/>
    <lineage>
        <taxon>Bacteria</taxon>
        <taxon>Bacillati</taxon>
        <taxon>Actinomycetota</taxon>
        <taxon>Actinomycetes</taxon>
        <taxon>Bifidobacteriales</taxon>
        <taxon>Bifidobacteriaceae</taxon>
        <taxon>Bifidobacterium</taxon>
    </lineage>
</organism>